<comment type="function">
    <text>Induced during competence development. Not needed for DNA uptake. May be involved in a recombination step.</text>
</comment>
<comment type="similarity">
    <text evidence="2">Belongs to the Mg-chelatase subunits D/I family. ComM subfamily.</text>
</comment>
<gene>
    <name type="primary">comM</name>
    <name type="ordered locus">HI_1117</name>
</gene>
<reference key="1">
    <citation type="journal article" date="1995" name="Science">
        <title>Whole-genome random sequencing and assembly of Haemophilus influenzae Rd.</title>
        <authorList>
            <person name="Fleischmann R.D."/>
            <person name="Adams M.D."/>
            <person name="White O."/>
            <person name="Clayton R.A."/>
            <person name="Kirkness E.F."/>
            <person name="Kerlavage A.R."/>
            <person name="Bult C.J."/>
            <person name="Tomb J.-F."/>
            <person name="Dougherty B.A."/>
            <person name="Merrick J.M."/>
            <person name="McKenney K."/>
            <person name="Sutton G.G."/>
            <person name="FitzHugh W."/>
            <person name="Fields C.A."/>
            <person name="Gocayne J.D."/>
            <person name="Scott J.D."/>
            <person name="Shirley R."/>
            <person name="Liu L.-I."/>
            <person name="Glodek A."/>
            <person name="Kelley J.M."/>
            <person name="Weidman J.F."/>
            <person name="Phillips C.A."/>
            <person name="Spriggs T."/>
            <person name="Hedblom E."/>
            <person name="Cotton M.D."/>
            <person name="Utterback T.R."/>
            <person name="Hanna M.C."/>
            <person name="Nguyen D.T."/>
            <person name="Saudek D.M."/>
            <person name="Brandon R.C."/>
            <person name="Fine L.D."/>
            <person name="Fritchman J.L."/>
            <person name="Fuhrmann J.L."/>
            <person name="Geoghagen N.S.M."/>
            <person name="Gnehm C.L."/>
            <person name="McDonald L.A."/>
            <person name="Small K.V."/>
            <person name="Fraser C.M."/>
            <person name="Smith H.O."/>
            <person name="Venter J.C."/>
        </authorList>
    </citation>
    <scope>NUCLEOTIDE SEQUENCE [LARGE SCALE GENOMIC DNA]</scope>
    <source>
        <strain>ATCC 51907 / DSM 11121 / KW20 / Rd</strain>
    </source>
</reference>
<reference key="2">
    <citation type="journal article" date="1998" name="J. Bacteriol.">
        <title>A new transformation-deficient mutant of Haemophilus influenzae Rd with normal DNA uptake.</title>
        <authorList>
            <person name="Gwinn M.L."/>
            <person name="Ramanathan R."/>
            <person name="Smith H.O."/>
            <person name="Tomb J.-F."/>
        </authorList>
    </citation>
    <scope>CHARACTERIZATION</scope>
    <source>
        <strain>ATCC 51907 / DSM 11121 / KW20 / Rd</strain>
    </source>
</reference>
<organism>
    <name type="scientific">Haemophilus influenzae (strain ATCC 51907 / DSM 11121 / KW20 / Rd)</name>
    <dbReference type="NCBI Taxonomy" id="71421"/>
    <lineage>
        <taxon>Bacteria</taxon>
        <taxon>Pseudomonadati</taxon>
        <taxon>Pseudomonadota</taxon>
        <taxon>Gammaproteobacteria</taxon>
        <taxon>Pasteurellales</taxon>
        <taxon>Pasteurellaceae</taxon>
        <taxon>Haemophilus</taxon>
    </lineage>
</organism>
<dbReference type="EMBL" id="L42023">
    <property type="protein sequence ID" value="AAC22771.1"/>
    <property type="molecule type" value="Genomic_DNA"/>
</dbReference>
<dbReference type="PIR" id="I64183">
    <property type="entry name" value="I64183"/>
</dbReference>
<dbReference type="RefSeq" id="NP_439274.1">
    <property type="nucleotide sequence ID" value="NC_000907.1"/>
</dbReference>
<dbReference type="SMR" id="P45049"/>
<dbReference type="STRING" id="71421.HI_1117"/>
<dbReference type="EnsemblBacteria" id="AAC22771">
    <property type="protein sequence ID" value="AAC22771"/>
    <property type="gene ID" value="HI_1117"/>
</dbReference>
<dbReference type="KEGG" id="hin:HI_1117"/>
<dbReference type="PATRIC" id="fig|71421.8.peg.1166"/>
<dbReference type="eggNOG" id="COG0606">
    <property type="taxonomic scope" value="Bacteria"/>
</dbReference>
<dbReference type="HOGENOM" id="CLU_026145_1_1_6"/>
<dbReference type="OrthoDB" id="9813147at2"/>
<dbReference type="PhylomeDB" id="P45049"/>
<dbReference type="BioCyc" id="HINF71421:G1GJ1-1152-MONOMER"/>
<dbReference type="Proteomes" id="UP000000579">
    <property type="component" value="Chromosome"/>
</dbReference>
<dbReference type="GO" id="GO:0005524">
    <property type="term" value="F:ATP binding"/>
    <property type="evidence" value="ECO:0007669"/>
    <property type="project" value="UniProtKB-KW"/>
</dbReference>
<dbReference type="GO" id="GO:0016887">
    <property type="term" value="F:ATP hydrolysis activity"/>
    <property type="evidence" value="ECO:0007669"/>
    <property type="project" value="InterPro"/>
</dbReference>
<dbReference type="GO" id="GO:0003677">
    <property type="term" value="F:DNA binding"/>
    <property type="evidence" value="ECO:0007669"/>
    <property type="project" value="InterPro"/>
</dbReference>
<dbReference type="GO" id="GO:0030420">
    <property type="term" value="P:establishment of competence for transformation"/>
    <property type="evidence" value="ECO:0007669"/>
    <property type="project" value="UniProtKB-KW"/>
</dbReference>
<dbReference type="Gene3D" id="3.30.230.10">
    <property type="match status" value="1"/>
</dbReference>
<dbReference type="Gene3D" id="3.40.50.300">
    <property type="entry name" value="P-loop containing nucleotide triphosphate hydrolases"/>
    <property type="match status" value="1"/>
</dbReference>
<dbReference type="InterPro" id="IPR003593">
    <property type="entry name" value="AAA+_ATPase"/>
</dbReference>
<dbReference type="InterPro" id="IPR045006">
    <property type="entry name" value="CHLI-like"/>
</dbReference>
<dbReference type="InterPro" id="IPR001208">
    <property type="entry name" value="MCM_dom"/>
</dbReference>
<dbReference type="InterPro" id="IPR004482">
    <property type="entry name" value="Mg_chelat-rel"/>
</dbReference>
<dbReference type="InterPro" id="IPR025158">
    <property type="entry name" value="Mg_chelat-rel_C"/>
</dbReference>
<dbReference type="InterPro" id="IPR000523">
    <property type="entry name" value="Mg_chelatse_chII-like_cat_dom"/>
</dbReference>
<dbReference type="InterPro" id="IPR027417">
    <property type="entry name" value="P-loop_NTPase"/>
</dbReference>
<dbReference type="InterPro" id="IPR020568">
    <property type="entry name" value="Ribosomal_Su5_D2-typ_SF"/>
</dbReference>
<dbReference type="InterPro" id="IPR014721">
    <property type="entry name" value="Ribsml_uS5_D2-typ_fold_subgr"/>
</dbReference>
<dbReference type="NCBIfam" id="NF007365">
    <property type="entry name" value="PRK09862.1"/>
    <property type="match status" value="1"/>
</dbReference>
<dbReference type="NCBIfam" id="TIGR00368">
    <property type="entry name" value="YifB family Mg chelatase-like AAA ATPase"/>
    <property type="match status" value="1"/>
</dbReference>
<dbReference type="PANTHER" id="PTHR32039:SF7">
    <property type="entry name" value="COMPETENCE PROTEIN COMM"/>
    <property type="match status" value="1"/>
</dbReference>
<dbReference type="PANTHER" id="PTHR32039">
    <property type="entry name" value="MAGNESIUM-CHELATASE SUBUNIT CHLI"/>
    <property type="match status" value="1"/>
</dbReference>
<dbReference type="Pfam" id="PF13541">
    <property type="entry name" value="ChlI"/>
    <property type="match status" value="1"/>
</dbReference>
<dbReference type="Pfam" id="PF01078">
    <property type="entry name" value="Mg_chelatase"/>
    <property type="match status" value="1"/>
</dbReference>
<dbReference type="Pfam" id="PF13335">
    <property type="entry name" value="Mg_chelatase_C"/>
    <property type="match status" value="1"/>
</dbReference>
<dbReference type="PRINTS" id="PR01657">
    <property type="entry name" value="MCMFAMILY"/>
</dbReference>
<dbReference type="SMART" id="SM00382">
    <property type="entry name" value="AAA"/>
    <property type="match status" value="1"/>
</dbReference>
<dbReference type="SUPFAM" id="SSF52540">
    <property type="entry name" value="P-loop containing nucleoside triphosphate hydrolases"/>
    <property type="match status" value="1"/>
</dbReference>
<dbReference type="SUPFAM" id="SSF54211">
    <property type="entry name" value="Ribosomal protein S5 domain 2-like"/>
    <property type="match status" value="1"/>
</dbReference>
<keyword id="KW-0067">ATP-binding</keyword>
<keyword id="KW-0178">Competence</keyword>
<keyword id="KW-0547">Nucleotide-binding</keyword>
<keyword id="KW-1185">Reference proteome</keyword>
<feature type="chain" id="PRO_0000206876" description="Competence protein ComM">
    <location>
        <begin position="1"/>
        <end position="509"/>
    </location>
</feature>
<feature type="binding site" evidence="1">
    <location>
        <begin position="222"/>
        <end position="229"/>
    </location>
    <ligand>
        <name>ATP</name>
        <dbReference type="ChEBI" id="CHEBI:30616"/>
    </ligand>
</feature>
<proteinExistence type="evidence at protein level"/>
<evidence type="ECO:0000255" key="1"/>
<evidence type="ECO:0000305" key="2"/>
<protein>
    <recommendedName>
        <fullName>Competence protein ComM</fullName>
    </recommendedName>
</protein>
<sequence>MSLAIVYSRASMGVQAPLVTIEVHLSNGKPGFTLVGLPEKTVKEAQDRVRSALMNAQFKYPAKRITVNLAPADLPKEGGRFDLPIAIGILAASDQLDASHLKQFEFVAELALTGQLRGVHGVIPAILAAQKSKRELIIAKQNANEASLVSDQNTYFAQTLLDVVQFLNGQEKLPLATEIVKESAVNFSGKNTLDLTDIIGQQHAKRALTIAAAGQHNLLFLGPPGTGKTMLASRLTGLLPEMTDLEAIETASVTSLVQNELNFHNWKQRPFRAPHHSASMPALVGGGTIPKPGEISLATNGVLFLDELPEFERKVLDALRQPLESGEIIISRANAKIQFPARFQLVAAMNPSPTGHYTGTHNRTSPQQIMRYLNRLSGPFLDRFDLSIEVPLLPQGSLQNTGDRGETSAQVREKVLKVREIQMERAGKINAYLNSKEIERDCKLNDKDAFFLEKALNKLGLSVRAYHRILKVSRTIADLQGEQQIFQPHLAEALGYRAMVRLLQKLSNM</sequence>
<accession>P45049</accession>
<name>COMM_HAEIN</name>